<dbReference type="EC" id="2.7.11.-" evidence="1"/>
<dbReference type="EC" id="2.7.4.-" evidence="1"/>
<dbReference type="EMBL" id="CP000002">
    <property type="protein sequence ID" value="AAU25193.1"/>
    <property type="molecule type" value="Genomic_DNA"/>
</dbReference>
<dbReference type="EMBL" id="AE017333">
    <property type="protein sequence ID" value="AAU42564.1"/>
    <property type="molecule type" value="Genomic_DNA"/>
</dbReference>
<dbReference type="RefSeq" id="WP_003185623.1">
    <property type="nucleotide sequence ID" value="NC_006322.1"/>
</dbReference>
<dbReference type="SMR" id="Q65EF0"/>
<dbReference type="STRING" id="279010.BL03401"/>
<dbReference type="GeneID" id="92859677"/>
<dbReference type="KEGG" id="bld:BLi03746"/>
<dbReference type="KEGG" id="bli:BL03401"/>
<dbReference type="eggNOG" id="COG1493">
    <property type="taxonomic scope" value="Bacteria"/>
</dbReference>
<dbReference type="HOGENOM" id="CLU_052030_0_1_9"/>
<dbReference type="Proteomes" id="UP000000606">
    <property type="component" value="Chromosome"/>
</dbReference>
<dbReference type="GO" id="GO:0005524">
    <property type="term" value="F:ATP binding"/>
    <property type="evidence" value="ECO:0007669"/>
    <property type="project" value="UniProtKB-UniRule"/>
</dbReference>
<dbReference type="GO" id="GO:0000287">
    <property type="term" value="F:magnesium ion binding"/>
    <property type="evidence" value="ECO:0007669"/>
    <property type="project" value="UniProtKB-UniRule"/>
</dbReference>
<dbReference type="GO" id="GO:0000155">
    <property type="term" value="F:phosphorelay sensor kinase activity"/>
    <property type="evidence" value="ECO:0007669"/>
    <property type="project" value="InterPro"/>
</dbReference>
<dbReference type="GO" id="GO:0004674">
    <property type="term" value="F:protein serine/threonine kinase activity"/>
    <property type="evidence" value="ECO:0007669"/>
    <property type="project" value="UniProtKB-KW"/>
</dbReference>
<dbReference type="GO" id="GO:0004712">
    <property type="term" value="F:protein serine/threonine/tyrosine kinase activity"/>
    <property type="evidence" value="ECO:0007669"/>
    <property type="project" value="UniProtKB-UniRule"/>
</dbReference>
<dbReference type="GO" id="GO:0006109">
    <property type="term" value="P:regulation of carbohydrate metabolic process"/>
    <property type="evidence" value="ECO:0007669"/>
    <property type="project" value="UniProtKB-UniRule"/>
</dbReference>
<dbReference type="CDD" id="cd01918">
    <property type="entry name" value="HprK_C"/>
    <property type="match status" value="1"/>
</dbReference>
<dbReference type="FunFam" id="3.40.1390.20:FF:000002">
    <property type="entry name" value="HPr kinase/phosphorylase"/>
    <property type="match status" value="1"/>
</dbReference>
<dbReference type="FunFam" id="3.40.50.300:FF:000174">
    <property type="entry name" value="HPr kinase/phosphorylase"/>
    <property type="match status" value="1"/>
</dbReference>
<dbReference type="Gene3D" id="3.40.1390.20">
    <property type="entry name" value="HprK N-terminal domain-like"/>
    <property type="match status" value="1"/>
</dbReference>
<dbReference type="Gene3D" id="3.40.50.300">
    <property type="entry name" value="P-loop containing nucleotide triphosphate hydrolases"/>
    <property type="match status" value="1"/>
</dbReference>
<dbReference type="HAMAP" id="MF_01249">
    <property type="entry name" value="HPr_kinase"/>
    <property type="match status" value="1"/>
</dbReference>
<dbReference type="InterPro" id="IPR003755">
    <property type="entry name" value="HPr(Ser)_kin/Pase"/>
</dbReference>
<dbReference type="InterPro" id="IPR011104">
    <property type="entry name" value="Hpr_kin/Pase_C"/>
</dbReference>
<dbReference type="InterPro" id="IPR011126">
    <property type="entry name" value="Hpr_kin/Pase_Hpr_N"/>
</dbReference>
<dbReference type="InterPro" id="IPR027417">
    <property type="entry name" value="P-loop_NTPase"/>
</dbReference>
<dbReference type="InterPro" id="IPR028979">
    <property type="entry name" value="Ser_kin/Pase_Hpr-like_N_sf"/>
</dbReference>
<dbReference type="NCBIfam" id="TIGR00679">
    <property type="entry name" value="hpr-ser"/>
    <property type="match status" value="1"/>
</dbReference>
<dbReference type="PANTHER" id="PTHR30305:SF1">
    <property type="entry name" value="HPR KINASE_PHOSPHORYLASE"/>
    <property type="match status" value="1"/>
</dbReference>
<dbReference type="PANTHER" id="PTHR30305">
    <property type="entry name" value="PROTEIN YJDM-RELATED"/>
    <property type="match status" value="1"/>
</dbReference>
<dbReference type="Pfam" id="PF07475">
    <property type="entry name" value="Hpr_kinase_C"/>
    <property type="match status" value="1"/>
</dbReference>
<dbReference type="Pfam" id="PF02603">
    <property type="entry name" value="Hpr_kinase_N"/>
    <property type="match status" value="1"/>
</dbReference>
<dbReference type="SUPFAM" id="SSF75138">
    <property type="entry name" value="HprK N-terminal domain-like"/>
    <property type="match status" value="1"/>
</dbReference>
<dbReference type="SUPFAM" id="SSF53795">
    <property type="entry name" value="PEP carboxykinase-like"/>
    <property type="match status" value="1"/>
</dbReference>
<proteinExistence type="inferred from homology"/>
<reference key="1">
    <citation type="journal article" date="2004" name="J. Mol. Microbiol. Biotechnol.">
        <title>The complete genome sequence of Bacillus licheniformis DSM13, an organism with great industrial potential.</title>
        <authorList>
            <person name="Veith B."/>
            <person name="Herzberg C."/>
            <person name="Steckel S."/>
            <person name="Feesche J."/>
            <person name="Maurer K.H."/>
            <person name="Ehrenreich P."/>
            <person name="Baeumer S."/>
            <person name="Henne A."/>
            <person name="Liesegang H."/>
            <person name="Merkl R."/>
            <person name="Ehrenreich A."/>
            <person name="Gottschalk G."/>
        </authorList>
    </citation>
    <scope>NUCLEOTIDE SEQUENCE [LARGE SCALE GENOMIC DNA]</scope>
    <source>
        <strain>ATCC 14580 / DSM 13 / JCM 2505 / CCUG 7422 / NBRC 12200 / NCIMB 9375 / NCTC 10341 / NRRL NRS-1264 / Gibson 46</strain>
    </source>
</reference>
<reference key="2">
    <citation type="journal article" date="2004" name="Genome Biol.">
        <title>Complete genome sequence of the industrial bacterium Bacillus licheniformis and comparisons with closely related Bacillus species.</title>
        <authorList>
            <person name="Rey M.W."/>
            <person name="Ramaiya P."/>
            <person name="Nelson B.A."/>
            <person name="Brody-Karpin S.D."/>
            <person name="Zaretsky E.J."/>
            <person name="Tang M."/>
            <person name="Lopez de Leon A."/>
            <person name="Xiang H."/>
            <person name="Gusti V."/>
            <person name="Clausen I.G."/>
            <person name="Olsen P.B."/>
            <person name="Rasmussen M.D."/>
            <person name="Andersen J.T."/>
            <person name="Joergensen P.L."/>
            <person name="Larsen T.S."/>
            <person name="Sorokin A."/>
            <person name="Bolotin A."/>
            <person name="Lapidus A."/>
            <person name="Galleron N."/>
            <person name="Ehrlich S.D."/>
            <person name="Berka R.M."/>
        </authorList>
    </citation>
    <scope>NUCLEOTIDE SEQUENCE [LARGE SCALE GENOMIC DNA]</scope>
    <source>
        <strain>ATCC 14580 / DSM 13 / JCM 2505 / CCUG 7422 / NBRC 12200 / NCIMB 9375 / NCTC 10341 / NRRL NRS-1264 / Gibson 46</strain>
    </source>
</reference>
<gene>
    <name evidence="1" type="primary">hprK</name>
    <name type="ordered locus">BLi03746</name>
    <name type="ordered locus">BL03401</name>
</gene>
<protein>
    <recommendedName>
        <fullName evidence="1">HPr kinase/phosphorylase</fullName>
        <shortName evidence="1">HPrK/P</shortName>
        <ecNumber evidence="1">2.7.11.-</ecNumber>
        <ecNumber evidence="1">2.7.4.-</ecNumber>
    </recommendedName>
    <alternativeName>
        <fullName evidence="1">HPr(Ser) kinase/phosphorylase</fullName>
    </alternativeName>
</protein>
<keyword id="KW-0067">ATP-binding</keyword>
<keyword id="KW-0119">Carbohydrate metabolism</keyword>
<keyword id="KW-0418">Kinase</keyword>
<keyword id="KW-0460">Magnesium</keyword>
<keyword id="KW-0479">Metal-binding</keyword>
<keyword id="KW-0511">Multifunctional enzyme</keyword>
<keyword id="KW-0547">Nucleotide-binding</keyword>
<keyword id="KW-1185">Reference proteome</keyword>
<keyword id="KW-0723">Serine/threonine-protein kinase</keyword>
<keyword id="KW-0808">Transferase</keyword>
<accession>Q65EF0</accession>
<accession>Q62PW8</accession>
<evidence type="ECO:0000255" key="1">
    <source>
        <dbReference type="HAMAP-Rule" id="MF_01249"/>
    </source>
</evidence>
<name>HPRK_BACLD</name>
<comment type="function">
    <text evidence="1">Catalyzes the ATP- as well as the pyrophosphate-dependent phosphorylation of a specific serine residue in HPr, a phosphocarrier protein of the phosphoenolpyruvate-dependent sugar phosphotransferase system (PTS). HprK/P also catalyzes the pyrophosphate-producing, inorganic phosphate-dependent dephosphorylation (phosphorolysis) of seryl-phosphorylated HPr (P-Ser-HPr). The two antagonistic activities of HprK/P are regulated by several intracellular metabolites, which change their concentration in response to the absence or presence of rapidly metabolisable carbon sources (glucose, fructose, etc.) in the growth medium. Also phosphorylates/dephosphorylates the HPr-like catabolite repression protein crh on a specific serine residue. Therefore, by controlling the phosphorylation state of HPr and crh, HPrK/P is a sensor enzyme that plays a major role in the regulation of carbon metabolism and sugar transport: it mediates carbon catabolite repression (CCR), and regulates PTS-catalyzed carbohydrate uptake and inducer exclusion.</text>
</comment>
<comment type="catalytic activity">
    <reaction evidence="1">
        <text>[HPr protein]-L-serine + ATP = [HPr protein]-O-phospho-L-serine + ADP + H(+)</text>
        <dbReference type="Rhea" id="RHEA:46600"/>
        <dbReference type="Rhea" id="RHEA-COMP:11602"/>
        <dbReference type="Rhea" id="RHEA-COMP:11603"/>
        <dbReference type="ChEBI" id="CHEBI:15378"/>
        <dbReference type="ChEBI" id="CHEBI:29999"/>
        <dbReference type="ChEBI" id="CHEBI:30616"/>
        <dbReference type="ChEBI" id="CHEBI:83421"/>
        <dbReference type="ChEBI" id="CHEBI:456216"/>
    </reaction>
</comment>
<comment type="catalytic activity">
    <reaction evidence="1">
        <text>[HPr protein]-O-phospho-L-serine + phosphate + H(+) = [HPr protein]-L-serine + diphosphate</text>
        <dbReference type="Rhea" id="RHEA:46604"/>
        <dbReference type="Rhea" id="RHEA-COMP:11602"/>
        <dbReference type="Rhea" id="RHEA-COMP:11603"/>
        <dbReference type="ChEBI" id="CHEBI:15378"/>
        <dbReference type="ChEBI" id="CHEBI:29999"/>
        <dbReference type="ChEBI" id="CHEBI:33019"/>
        <dbReference type="ChEBI" id="CHEBI:43474"/>
        <dbReference type="ChEBI" id="CHEBI:83421"/>
    </reaction>
</comment>
<comment type="cofactor">
    <cofactor evidence="1">
        <name>Mg(2+)</name>
        <dbReference type="ChEBI" id="CHEBI:18420"/>
    </cofactor>
</comment>
<comment type="subunit">
    <text evidence="1">Homohexamer.</text>
</comment>
<comment type="domain">
    <text evidence="1">The Walker A ATP-binding motif also binds Pi and PPi.</text>
</comment>
<comment type="miscellaneous">
    <text evidence="1">Both phosphorylation and phosphorolysis are carried out by the same active site and suggest a common mechanism for both reactions.</text>
</comment>
<comment type="similarity">
    <text evidence="1">Belongs to the HPrK/P family.</text>
</comment>
<feature type="chain" id="PRO_1000067123" description="HPr kinase/phosphorylase">
    <location>
        <begin position="1"/>
        <end position="310"/>
    </location>
</feature>
<feature type="region of interest" description="Important for the catalytic mechanism of both phosphorylation and dephosphorylation" evidence="1">
    <location>
        <begin position="201"/>
        <end position="210"/>
    </location>
</feature>
<feature type="region of interest" description="Important for the catalytic mechanism of dephosphorylation" evidence="1">
    <location>
        <begin position="264"/>
        <end position="269"/>
    </location>
</feature>
<feature type="active site" evidence="1">
    <location>
        <position position="138"/>
    </location>
</feature>
<feature type="active site" evidence="1">
    <location>
        <position position="159"/>
    </location>
</feature>
<feature type="active site" description="Proton acceptor; for phosphorylation activity. Proton donor; for dephosphorylation activity" evidence="1">
    <location>
        <position position="177"/>
    </location>
</feature>
<feature type="active site" evidence="1">
    <location>
        <position position="243"/>
    </location>
</feature>
<feature type="binding site" evidence="1">
    <location>
        <begin position="153"/>
        <end position="160"/>
    </location>
    <ligand>
        <name>ATP</name>
        <dbReference type="ChEBI" id="CHEBI:30616"/>
    </ligand>
</feature>
<feature type="binding site" evidence="1">
    <location>
        <position position="160"/>
    </location>
    <ligand>
        <name>Mg(2+)</name>
        <dbReference type="ChEBI" id="CHEBI:18420"/>
    </ligand>
</feature>
<feature type="binding site" evidence="1">
    <location>
        <position position="202"/>
    </location>
    <ligand>
        <name>Mg(2+)</name>
        <dbReference type="ChEBI" id="CHEBI:18420"/>
    </ligand>
</feature>
<organism>
    <name type="scientific">Bacillus licheniformis (strain ATCC 14580 / DSM 13 / JCM 2505 / CCUG 7422 / NBRC 12200 / NCIMB 9375 / NCTC 10341 / NRRL NRS-1264 / Gibson 46)</name>
    <dbReference type="NCBI Taxonomy" id="279010"/>
    <lineage>
        <taxon>Bacteria</taxon>
        <taxon>Bacillati</taxon>
        <taxon>Bacillota</taxon>
        <taxon>Bacilli</taxon>
        <taxon>Bacillales</taxon>
        <taxon>Bacillaceae</taxon>
        <taxon>Bacillus</taxon>
    </lineage>
</organism>
<sequence>MPKVRTKDVMDKFKLELISGEEGINRPITMSDLSRPGLEMAGYFTYYPKERVQLLGKTEITFFEKLPEEEKKQRMLSLCTEITPAIILSRDLPIPPELVEASEENGVPVLRSPLKTTRLTSRLTNFLESQLAPTTAIHGVLVDVYGVGVLIIGKSGVGKSETALELVKRGHRLVADDCVEIRQEDQDTLIGSAPELIEHLLEIRGLGIINVMTLFGAGAVRSFKRITLVMSLELWEQGKQYDRLGLEEETMKIIDTDVPKLTIPVRPGRNLAVIIEVAAMNFRLKRMGLNAAEQFTHKLADVIEDGELEE</sequence>